<geneLocation type="chloroplast"/>
<dbReference type="EMBL" id="U38804">
    <property type="protein sequence ID" value="AAC08203.1"/>
    <property type="molecule type" value="Genomic_DNA"/>
</dbReference>
<dbReference type="PIR" id="S73238">
    <property type="entry name" value="S73238"/>
</dbReference>
<dbReference type="RefSeq" id="NP_053927.1">
    <property type="nucleotide sequence ID" value="NC_000925.1"/>
</dbReference>
<dbReference type="SMR" id="P51317"/>
<dbReference type="GeneID" id="809946"/>
<dbReference type="GO" id="GO:0009535">
    <property type="term" value="C:chloroplast thylakoid membrane"/>
    <property type="evidence" value="ECO:0007669"/>
    <property type="project" value="UniProtKB-SubCell"/>
</dbReference>
<dbReference type="GO" id="GO:0009539">
    <property type="term" value="C:photosystem II reaction center"/>
    <property type="evidence" value="ECO:0007669"/>
    <property type="project" value="InterPro"/>
</dbReference>
<dbReference type="GO" id="GO:0015979">
    <property type="term" value="P:photosynthesis"/>
    <property type="evidence" value="ECO:0007669"/>
    <property type="project" value="UniProtKB-UniRule"/>
</dbReference>
<dbReference type="HAMAP" id="MF_00441">
    <property type="entry name" value="PSII_PsbK"/>
    <property type="match status" value="1"/>
</dbReference>
<dbReference type="InterPro" id="IPR003687">
    <property type="entry name" value="PSII_PsbK"/>
</dbReference>
<dbReference type="InterPro" id="IPR037270">
    <property type="entry name" value="PSII_PsbK_sf"/>
</dbReference>
<dbReference type="NCBIfam" id="NF002715">
    <property type="entry name" value="PRK02553.1"/>
    <property type="match status" value="1"/>
</dbReference>
<dbReference type="PANTHER" id="PTHR35325">
    <property type="match status" value="1"/>
</dbReference>
<dbReference type="PANTHER" id="PTHR35325:SF1">
    <property type="entry name" value="PHOTOSYSTEM II REACTION CENTER PROTEIN K"/>
    <property type="match status" value="1"/>
</dbReference>
<dbReference type="Pfam" id="PF02533">
    <property type="entry name" value="PsbK"/>
    <property type="match status" value="1"/>
</dbReference>
<dbReference type="SUPFAM" id="SSF161037">
    <property type="entry name" value="Photosystem II reaction center protein K, PsbK"/>
    <property type="match status" value="1"/>
</dbReference>
<comment type="function">
    <text evidence="1">One of the components of the core complex of photosystem II (PSII). PSII is a light-driven water:plastoquinone oxidoreductase that uses light energy to abstract electrons from H(2)O, generating O(2) and a proton gradient subsequently used for ATP formation. It consists of a core antenna complex that captures photons, and an electron transfer chain that converts photonic excitation into a charge separation.</text>
</comment>
<comment type="subunit">
    <text evidence="1">PSII is composed of 1 copy each of membrane proteins PsbA, PsbB, PsbC, PsbD, PsbE, PsbF, PsbH, PsbI, PsbJ, PsbK, PsbL, PsbM, PsbT, PsbX, PsbY, PsbZ, Psb30/Ycf12, at least 3 peripheral proteins of the oxygen-evolving complex and a large number of cofactors. It forms dimeric complexes.</text>
</comment>
<comment type="subcellular location">
    <subcellularLocation>
        <location evidence="1">Plastid</location>
        <location evidence="1">Chloroplast thylakoid membrane</location>
        <topology evidence="1">Single-pass membrane protein</topology>
    </subcellularLocation>
</comment>
<comment type="similarity">
    <text evidence="1">Belongs to the PsbK family.</text>
</comment>
<protein>
    <recommendedName>
        <fullName evidence="1">Photosystem II reaction center protein K</fullName>
        <shortName evidence="1">PSII-K</shortName>
    </recommendedName>
</protein>
<keyword id="KW-0150">Chloroplast</keyword>
<keyword id="KW-0472">Membrane</keyword>
<keyword id="KW-0602">Photosynthesis</keyword>
<keyword id="KW-0604">Photosystem II</keyword>
<keyword id="KW-0934">Plastid</keyword>
<keyword id="KW-0674">Reaction center</keyword>
<keyword id="KW-0793">Thylakoid</keyword>
<keyword id="KW-0812">Transmembrane</keyword>
<keyword id="KW-1133">Transmembrane helix</keyword>
<sequence length="45" mass="5051">MNSALFLAKLPEAYAVFKPIVDILPVIPVFFLLLAFVWQAAIGFR</sequence>
<reference key="1">
    <citation type="journal article" date="1995" name="Plant Mol. Biol. Rep.">
        <title>Complete nucleotide sequence of the Porphyra purpurea chloroplast genome.</title>
        <authorList>
            <person name="Reith M.E."/>
            <person name="Munholland J."/>
        </authorList>
    </citation>
    <scope>NUCLEOTIDE SEQUENCE [LARGE SCALE GENOMIC DNA]</scope>
    <source>
        <strain>Avonport</strain>
    </source>
</reference>
<proteinExistence type="inferred from homology"/>
<evidence type="ECO:0000255" key="1">
    <source>
        <dbReference type="HAMAP-Rule" id="MF_00441"/>
    </source>
</evidence>
<organism>
    <name type="scientific">Porphyra purpurea</name>
    <name type="common">Red seaweed</name>
    <name type="synonym">Ulva purpurea</name>
    <dbReference type="NCBI Taxonomy" id="2787"/>
    <lineage>
        <taxon>Eukaryota</taxon>
        <taxon>Rhodophyta</taxon>
        <taxon>Bangiophyceae</taxon>
        <taxon>Bangiales</taxon>
        <taxon>Bangiaceae</taxon>
        <taxon>Porphyra</taxon>
    </lineage>
</organism>
<gene>
    <name evidence="1" type="primary">psbK</name>
</gene>
<feature type="propeptide" id="PRO_0000029515" evidence="1">
    <location>
        <begin position="1"/>
        <end position="8"/>
    </location>
</feature>
<feature type="chain" id="PRO_0000029516" description="Photosystem II reaction center protein K" evidence="1">
    <location>
        <begin position="9"/>
        <end position="45"/>
    </location>
</feature>
<feature type="transmembrane region" description="Helical" evidence="1">
    <location>
        <begin position="23"/>
        <end position="43"/>
    </location>
</feature>
<name>PSBK_PORPU</name>
<accession>P51317</accession>